<gene>
    <name evidence="1" type="primary">sepF</name>
    <name type="ordered locus">SPG_1573</name>
</gene>
<accession>B5E714</accession>
<accession>Q7D493</accession>
<accession>Q9ZHB7</accession>
<keyword id="KW-0131">Cell cycle</keyword>
<keyword id="KW-0132">Cell division</keyword>
<keyword id="KW-0963">Cytoplasm</keyword>
<keyword id="KW-0717">Septation</keyword>
<feature type="chain" id="PRO_1000138476" description="Cell division protein SepF">
    <location>
        <begin position="1"/>
        <end position="179"/>
    </location>
</feature>
<feature type="region of interest" description="Disordered" evidence="2">
    <location>
        <begin position="22"/>
        <end position="55"/>
    </location>
</feature>
<feature type="compositionally biased region" description="Polar residues" evidence="2">
    <location>
        <begin position="33"/>
        <end position="55"/>
    </location>
</feature>
<comment type="function">
    <text evidence="1">Cell division protein that is part of the divisome complex and is recruited early to the Z-ring. Probably stimulates Z-ring formation, perhaps through the cross-linking of FtsZ protofilaments. Its function overlaps with FtsA.</text>
</comment>
<comment type="subunit">
    <text evidence="1">Homodimer. Interacts with FtsZ.</text>
</comment>
<comment type="subcellular location">
    <subcellularLocation>
        <location evidence="1">Cytoplasm</location>
    </subcellularLocation>
    <text evidence="1">Localizes to the division site, in a FtsZ-dependent manner.</text>
</comment>
<comment type="similarity">
    <text evidence="1">Belongs to the SepF family.</text>
</comment>
<name>SEPF_STRP4</name>
<dbReference type="EMBL" id="AF068901">
    <property type="protein sequence ID" value="AAC95442.1"/>
    <property type="molecule type" value="Genomic_DNA"/>
</dbReference>
<dbReference type="EMBL" id="CP001015">
    <property type="protein sequence ID" value="ACF55722.1"/>
    <property type="molecule type" value="Genomic_DNA"/>
</dbReference>
<dbReference type="SMR" id="B5E714"/>
<dbReference type="KEGG" id="spx:SPG_1573"/>
<dbReference type="HOGENOM" id="CLU_078499_2_0_9"/>
<dbReference type="GO" id="GO:0005737">
    <property type="term" value="C:cytoplasm"/>
    <property type="evidence" value="ECO:0007669"/>
    <property type="project" value="UniProtKB-SubCell"/>
</dbReference>
<dbReference type="GO" id="GO:0000917">
    <property type="term" value="P:division septum assembly"/>
    <property type="evidence" value="ECO:0007669"/>
    <property type="project" value="UniProtKB-KW"/>
</dbReference>
<dbReference type="GO" id="GO:0043093">
    <property type="term" value="P:FtsZ-dependent cytokinesis"/>
    <property type="evidence" value="ECO:0007669"/>
    <property type="project" value="UniProtKB-UniRule"/>
</dbReference>
<dbReference type="Gene3D" id="3.30.110.150">
    <property type="entry name" value="SepF-like protein"/>
    <property type="match status" value="1"/>
</dbReference>
<dbReference type="HAMAP" id="MF_01197">
    <property type="entry name" value="SepF"/>
    <property type="match status" value="1"/>
</dbReference>
<dbReference type="InterPro" id="IPR023052">
    <property type="entry name" value="Cell_div_SepF"/>
</dbReference>
<dbReference type="InterPro" id="IPR007561">
    <property type="entry name" value="Cell_div_SepF/SepF-rel"/>
</dbReference>
<dbReference type="InterPro" id="IPR038594">
    <property type="entry name" value="SepF-like_sf"/>
</dbReference>
<dbReference type="PANTHER" id="PTHR35798">
    <property type="entry name" value="CELL DIVISION PROTEIN SEPF"/>
    <property type="match status" value="1"/>
</dbReference>
<dbReference type="PANTHER" id="PTHR35798:SF1">
    <property type="entry name" value="CELL DIVISION PROTEIN SEPF"/>
    <property type="match status" value="1"/>
</dbReference>
<dbReference type="Pfam" id="PF04472">
    <property type="entry name" value="SepF"/>
    <property type="match status" value="1"/>
</dbReference>
<protein>
    <recommendedName>
        <fullName evidence="1">Cell division protein SepF</fullName>
    </recommendedName>
</protein>
<organism>
    <name type="scientific">Streptococcus pneumoniae serotype 19F (strain G54)</name>
    <dbReference type="NCBI Taxonomy" id="512566"/>
    <lineage>
        <taxon>Bacteria</taxon>
        <taxon>Bacillati</taxon>
        <taxon>Bacillota</taxon>
        <taxon>Bacilli</taxon>
        <taxon>Lactobacillales</taxon>
        <taxon>Streptococcaceae</taxon>
        <taxon>Streptococcus</taxon>
    </lineage>
</organism>
<evidence type="ECO:0000255" key="1">
    <source>
        <dbReference type="HAMAP-Rule" id="MF_01197"/>
    </source>
</evidence>
<evidence type="ECO:0000256" key="2">
    <source>
        <dbReference type="SAM" id="MobiDB-lite"/>
    </source>
</evidence>
<proteinExistence type="inferred from homology"/>
<reference key="1">
    <citation type="journal article" date="1998" name="Microbiology">
        <title>Unconventional organization of the division and cell wall gene cluster of Streptococcus pneumoniae.</title>
        <authorList>
            <person name="Massidda O."/>
            <person name="Anderluzzi D."/>
            <person name="Friedli L."/>
            <person name="Feger G."/>
        </authorList>
    </citation>
    <scope>NUCLEOTIDE SEQUENCE [GENOMIC DNA]</scope>
</reference>
<reference key="2">
    <citation type="journal article" date="2001" name="Microb. Drug Resist.">
        <title>Annotated draft genomic sequence from a Streptococcus pneumoniae type 19F clinical isolate.</title>
        <authorList>
            <person name="Dopazo J."/>
            <person name="Mendoza A."/>
            <person name="Herrero J."/>
            <person name="Caldara F."/>
            <person name="Humbert Y."/>
            <person name="Friedli L."/>
            <person name="Guerrier M."/>
            <person name="Grand-Schenk E."/>
            <person name="Gandin C."/>
            <person name="de Francesco M."/>
            <person name="Polissi A."/>
            <person name="Buell G."/>
            <person name="Feger G."/>
            <person name="Garcia E."/>
            <person name="Peitsch M."/>
            <person name="Garcia-Bustos J.F."/>
        </authorList>
    </citation>
    <scope>NUCLEOTIDE SEQUENCE [LARGE SCALE GENOMIC DNA]</scope>
    <source>
        <strain>G54</strain>
    </source>
</reference>
<reference key="3">
    <citation type="submission" date="2008-03" db="EMBL/GenBank/DDBJ databases">
        <title>Pneumococcal beta glucoside metabolism investigated by whole genome comparison.</title>
        <authorList>
            <person name="Mulas L."/>
            <person name="Trappetti C."/>
            <person name="Hakenbeck R."/>
            <person name="Iannelli F."/>
            <person name="Pozzi G."/>
            <person name="Davidsen T.M."/>
            <person name="Tettelin H."/>
            <person name="Oggioni M."/>
        </authorList>
    </citation>
    <scope>NUCLEOTIDE SEQUENCE [LARGE SCALE GENOMIC DNA]</scope>
    <source>
        <strain>G54</strain>
    </source>
</reference>
<sequence length="179" mass="20627">MSLKDRFDRFIDYFTEDEDSSLPYEKRDEPVFTSVNSSQEPALPMNQPSQSAGTKENNITRLHARQQELANQSQRATDKVIIDVRYPRKYEDATEIVDLLAGNESILIDFQYMTEVQARRCLDYLDGACHVLAGNLKKVASTMYLLTPVNVIVNVEDIRLPDEDQQGEFGFDMKRNRVR</sequence>